<reference evidence="5" key="1">
    <citation type="journal article" date="2009" name="BMC Evol. Biol.">
        <title>A proteomic approach for studying insect phylogeny: CAPA peptides of ancient insect taxa (Dictyoptera, Blattoptera) as a test case.</title>
        <authorList>
            <person name="Roth S."/>
            <person name="Fromm B."/>
            <person name="Gaede G."/>
            <person name="Predel R."/>
        </authorList>
    </citation>
    <scope>PROTEIN SEQUENCE</scope>
    <scope>AMIDATION AT PHE-11</scope>
    <source>
        <tissue evidence="3">Corpora cardiaca</tissue>
    </source>
</reference>
<protein>
    <recommendedName>
        <fullName evidence="4">Sulfakinin-1</fullName>
        <shortName evidence="4">ArcTe-SK-1</shortName>
    </recommendedName>
</protein>
<accession>P85539</accession>
<name>SK1_ARCTE</name>
<sequence length="11" mass="1459">EQFEDYGHMRF</sequence>
<organism>
    <name type="scientific">Archimandrita tessellata</name>
    <name type="common">Peppered roach</name>
    <name type="synonym">Giant cockroach</name>
    <dbReference type="NCBI Taxonomy" id="36945"/>
    <lineage>
        <taxon>Eukaryota</taxon>
        <taxon>Metazoa</taxon>
        <taxon>Ecdysozoa</taxon>
        <taxon>Arthropoda</taxon>
        <taxon>Hexapoda</taxon>
        <taxon>Insecta</taxon>
        <taxon>Pterygota</taxon>
        <taxon>Neoptera</taxon>
        <taxon>Polyneoptera</taxon>
        <taxon>Dictyoptera</taxon>
        <taxon>Blattodea</taxon>
        <taxon>Blaberoidea</taxon>
        <taxon>Blaberidae</taxon>
        <taxon>Blaberinae</taxon>
        <taxon>Archimandrita</taxon>
    </lineage>
</organism>
<feature type="peptide" id="PRO_0000378859" description="Sulfakinin-1" evidence="3">
    <location>
        <begin position="1"/>
        <end position="11"/>
    </location>
</feature>
<feature type="modified residue" description="Sulfotyrosine" evidence="1">
    <location>
        <position position="6"/>
    </location>
</feature>
<feature type="modified residue" description="Phenylalanine amide" evidence="3">
    <location>
        <position position="11"/>
    </location>
</feature>
<dbReference type="GO" id="GO:0005576">
    <property type="term" value="C:extracellular region"/>
    <property type="evidence" value="ECO:0007669"/>
    <property type="project" value="UniProtKB-SubCell"/>
</dbReference>
<dbReference type="GO" id="GO:0005179">
    <property type="term" value="F:hormone activity"/>
    <property type="evidence" value="ECO:0007669"/>
    <property type="project" value="UniProtKB-KW"/>
</dbReference>
<dbReference type="GO" id="GO:0007218">
    <property type="term" value="P:neuropeptide signaling pathway"/>
    <property type="evidence" value="ECO:0007669"/>
    <property type="project" value="UniProtKB-KW"/>
</dbReference>
<dbReference type="InterPro" id="IPR013152">
    <property type="entry name" value="Gastrin/cholecystokinin_CS"/>
</dbReference>
<dbReference type="InterPro" id="IPR013259">
    <property type="entry name" value="Sulfakinin"/>
</dbReference>
<dbReference type="Pfam" id="PF08257">
    <property type="entry name" value="Sulfakinin"/>
    <property type="match status" value="1"/>
</dbReference>
<dbReference type="PROSITE" id="PS00259">
    <property type="entry name" value="GASTRIN"/>
    <property type="match status" value="1"/>
</dbReference>
<evidence type="ECO:0000250" key="1">
    <source>
        <dbReference type="UniProtKB" id="P41493"/>
    </source>
</evidence>
<evidence type="ECO:0000255" key="2"/>
<evidence type="ECO:0000269" key="3">
    <source>
    </source>
</evidence>
<evidence type="ECO:0000303" key="4">
    <source>
    </source>
</evidence>
<evidence type="ECO:0000305" key="5"/>
<keyword id="KW-0027">Amidation</keyword>
<keyword id="KW-0903">Direct protein sequencing</keyword>
<keyword id="KW-0372">Hormone</keyword>
<keyword id="KW-0527">Neuropeptide</keyword>
<keyword id="KW-0964">Secreted</keyword>
<keyword id="KW-0765">Sulfation</keyword>
<proteinExistence type="evidence at protein level"/>
<comment type="function">
    <text evidence="1">Myotropic peptide.</text>
</comment>
<comment type="subcellular location">
    <subcellularLocation>
        <location evidence="5">Secreted</location>
    </subcellularLocation>
</comment>
<comment type="similarity">
    <text evidence="2">Belongs to the gastrin/cholecystokinin family.</text>
</comment>